<name>SYEC_SCHPO</name>
<sequence>MSVSVALKAKPIAYGAVACANYVNLSGAGSISVKYEDVALLDKQNKESNVSIQLNGSDSPVFGSKLALQTFSQVYPKLFIGENDRSLVESWVETASALAGNHNFLELSSLLAQLDDHLIMRSLFVGYSLTSADFSIWGALKSNNMAAGAVRTGQYFNLARWYKFMDSQNAVSVTMEEFTKAVNISKKQKSSGPNYEIGLPDAIDGKVVTRFPPEPSGYLHIGHAKAALLNQYFANKYHGKLIVRFDDTNPSKENSEFQDAILEDVALLGIKPDVVTYTSDYLDTIHQYCVDMIKSGQAYADDTDVETMRHERTEGIPSKHRDRPIEESLEILSEMDKGSDVGLKNCIRAKISYENPNKAMRDPVIYRCNLLPHHRTGTKYRAYPTYDFACPIVDSLEGVTHALRTTEYRDRNPLYQWMIKAMNLRKIHVWEFSRMNFVRTLLSKRKLTEIVDHGLVWGWDDPRFPTVRGVRRRGMTIEALQQYIVSQGPSKNILTLDWTSFWATNKKIIDPVAPRHTAVESGDVVKATIVNGPAAPYAEDRPRHKKNPELGNKKSIFANEILIEQADAQSFKQDEEVTLMDWGNAYVREINRDASGKVTSLKLELHLDGDFKKTEKKVTWLADTEDKTPVDLVDFDYLITKDKLEEGENYKDFLTPQTEFHSPVFADVGIKNLKKGDIIQVERKGYYIVDVPFDGTQAVLFNIPDGKTVNRYGVKN</sequence>
<comment type="function">
    <text evidence="1">Catalyzes the attachment of glutamate to tRNA(Glu) in a two-step reaction: glutamate is first activated by ATP to form Glu-AMP and then transferred to the acceptor end of tRNA(Glu).</text>
</comment>
<comment type="catalytic activity">
    <reaction>
        <text>tRNA(Glu) + L-glutamate + ATP = L-glutamyl-tRNA(Glu) + AMP + diphosphate</text>
        <dbReference type="Rhea" id="RHEA:23540"/>
        <dbReference type="Rhea" id="RHEA-COMP:9663"/>
        <dbReference type="Rhea" id="RHEA-COMP:9680"/>
        <dbReference type="ChEBI" id="CHEBI:29985"/>
        <dbReference type="ChEBI" id="CHEBI:30616"/>
        <dbReference type="ChEBI" id="CHEBI:33019"/>
        <dbReference type="ChEBI" id="CHEBI:78442"/>
        <dbReference type="ChEBI" id="CHEBI:78520"/>
        <dbReference type="ChEBI" id="CHEBI:456215"/>
        <dbReference type="EC" id="6.1.1.17"/>
    </reaction>
</comment>
<comment type="subunit">
    <text evidence="1">Component of a yeast aminoacyl-tRNA synthase (aaRS) complex formed by methionyl-tRNA synthase, glutamyl-tRNA synthase and the tRNA aminoacylation cofactor arc1 in a stoichiometric complex. Interacts with arc1/SPAC30C2.04 (By similarity).</text>
</comment>
<comment type="subcellular location">
    <subcellularLocation>
        <location evidence="2">Cytoplasm</location>
    </subcellularLocation>
    <subcellularLocation>
        <location evidence="2">Nucleus</location>
    </subcellularLocation>
</comment>
<comment type="similarity">
    <text evidence="4">Belongs to the class-I aminoacyl-tRNA synthetase family. Glutamate--tRNA ligase type 2 subfamily.</text>
</comment>
<gene>
    <name type="primary">gus1</name>
    <name type="synonym">ers1</name>
    <name type="ORF">SPAC17A5.15c</name>
</gene>
<protein>
    <recommendedName>
        <fullName>Probable glutamate--tRNA ligase, cytoplasmic</fullName>
        <ecNumber>6.1.1.17</ecNumber>
    </recommendedName>
    <alternativeName>
        <fullName>Glutamyl-tRNA synthetase</fullName>
        <shortName>GluRS</shortName>
    </alternativeName>
</protein>
<proteinExistence type="evidence at protein level"/>
<organism>
    <name type="scientific">Schizosaccharomyces pombe (strain 972 / ATCC 24843)</name>
    <name type="common">Fission yeast</name>
    <dbReference type="NCBI Taxonomy" id="284812"/>
    <lineage>
        <taxon>Eukaryota</taxon>
        <taxon>Fungi</taxon>
        <taxon>Dikarya</taxon>
        <taxon>Ascomycota</taxon>
        <taxon>Taphrinomycotina</taxon>
        <taxon>Schizosaccharomycetes</taxon>
        <taxon>Schizosaccharomycetales</taxon>
        <taxon>Schizosaccharomycetaceae</taxon>
        <taxon>Schizosaccharomyces</taxon>
    </lineage>
</organism>
<keyword id="KW-0030">Aminoacyl-tRNA synthetase</keyword>
<keyword id="KW-0067">ATP-binding</keyword>
<keyword id="KW-0963">Cytoplasm</keyword>
<keyword id="KW-0436">Ligase</keyword>
<keyword id="KW-0547">Nucleotide-binding</keyword>
<keyword id="KW-0539">Nucleus</keyword>
<keyword id="KW-0597">Phosphoprotein</keyword>
<keyword id="KW-0648">Protein biosynthesis</keyword>
<keyword id="KW-1185">Reference proteome</keyword>
<dbReference type="EC" id="6.1.1.17"/>
<dbReference type="EMBL" id="CU329670">
    <property type="protein sequence ID" value="CAB11515.1"/>
    <property type="molecule type" value="Genomic_DNA"/>
</dbReference>
<dbReference type="PIR" id="T37830">
    <property type="entry name" value="T37830"/>
</dbReference>
<dbReference type="RefSeq" id="NP_593483.1">
    <property type="nucleotide sequence ID" value="NM_001018916.2"/>
</dbReference>
<dbReference type="SMR" id="O13775"/>
<dbReference type="BioGRID" id="278872">
    <property type="interactions" value="8"/>
</dbReference>
<dbReference type="FunCoup" id="O13775">
    <property type="interactions" value="280"/>
</dbReference>
<dbReference type="STRING" id="284812.O13775"/>
<dbReference type="iPTMnet" id="O13775"/>
<dbReference type="PaxDb" id="4896-SPAC17A5.15c.1"/>
<dbReference type="EnsemblFungi" id="SPAC17A5.15c.1">
    <property type="protein sequence ID" value="SPAC17A5.15c.1:pep"/>
    <property type="gene ID" value="SPAC17A5.15c"/>
</dbReference>
<dbReference type="GeneID" id="2542408"/>
<dbReference type="KEGG" id="spo:2542408"/>
<dbReference type="PomBase" id="SPAC17A5.15c">
    <property type="gene designation" value="gus1"/>
</dbReference>
<dbReference type="VEuPathDB" id="FungiDB:SPAC17A5.15c"/>
<dbReference type="eggNOG" id="KOG1147">
    <property type="taxonomic scope" value="Eukaryota"/>
</dbReference>
<dbReference type="HOGENOM" id="CLU_001882_1_2_1"/>
<dbReference type="InParanoid" id="O13775"/>
<dbReference type="OMA" id="CPVVDSH"/>
<dbReference type="PhylomeDB" id="O13775"/>
<dbReference type="PRO" id="PR:O13775"/>
<dbReference type="Proteomes" id="UP000002485">
    <property type="component" value="Chromosome I"/>
</dbReference>
<dbReference type="GO" id="GO:0010494">
    <property type="term" value="C:cytoplasmic stress granule"/>
    <property type="evidence" value="ECO:0000269"/>
    <property type="project" value="PomBase"/>
</dbReference>
<dbReference type="GO" id="GO:0005829">
    <property type="term" value="C:cytosol"/>
    <property type="evidence" value="ECO:0007005"/>
    <property type="project" value="PomBase"/>
</dbReference>
<dbReference type="GO" id="GO:0017102">
    <property type="term" value="C:methionyl glutamyl tRNA synthetase complex"/>
    <property type="evidence" value="ECO:0000353"/>
    <property type="project" value="PomBase"/>
</dbReference>
<dbReference type="GO" id="GO:0005634">
    <property type="term" value="C:nucleus"/>
    <property type="evidence" value="ECO:0007005"/>
    <property type="project" value="PomBase"/>
</dbReference>
<dbReference type="GO" id="GO:0005524">
    <property type="term" value="F:ATP binding"/>
    <property type="evidence" value="ECO:0007669"/>
    <property type="project" value="UniProtKB-KW"/>
</dbReference>
<dbReference type="GO" id="GO:0004818">
    <property type="term" value="F:glutamate-tRNA ligase activity"/>
    <property type="evidence" value="ECO:0000318"/>
    <property type="project" value="GO_Central"/>
</dbReference>
<dbReference type="GO" id="GO:0002181">
    <property type="term" value="P:cytoplasmic translation"/>
    <property type="evidence" value="ECO:0000303"/>
    <property type="project" value="PomBase"/>
</dbReference>
<dbReference type="GO" id="GO:0006424">
    <property type="term" value="P:glutamyl-tRNA aminoacylation"/>
    <property type="evidence" value="ECO:0000318"/>
    <property type="project" value="GO_Central"/>
</dbReference>
<dbReference type="CDD" id="cd00807">
    <property type="entry name" value="GlnRS_core"/>
    <property type="match status" value="1"/>
</dbReference>
<dbReference type="FunFam" id="3.40.50.620:FF:000070">
    <property type="entry name" value="Bifunctional glutamate/proline--tRNA ligase"/>
    <property type="match status" value="1"/>
</dbReference>
<dbReference type="FunFam" id="1.10.1160.10:FF:000001">
    <property type="entry name" value="Glutamine--tRNA ligase"/>
    <property type="match status" value="1"/>
</dbReference>
<dbReference type="FunFam" id="3.90.800.10:FF:000001">
    <property type="entry name" value="Glutamine--tRNA ligase"/>
    <property type="match status" value="1"/>
</dbReference>
<dbReference type="FunFam" id="2.40.240.10:FF:000004">
    <property type="entry name" value="Glutamyl-tRNA synthetase, cytoplasmic"/>
    <property type="match status" value="1"/>
</dbReference>
<dbReference type="Gene3D" id="1.20.1050.10">
    <property type="match status" value="1"/>
</dbReference>
<dbReference type="Gene3D" id="3.40.30.70">
    <property type="match status" value="1"/>
</dbReference>
<dbReference type="Gene3D" id="1.10.1160.10">
    <property type="entry name" value="Glutamyl-trna Synthetase, Domain 2"/>
    <property type="match status" value="1"/>
</dbReference>
<dbReference type="Gene3D" id="3.90.800.10">
    <property type="entry name" value="Glutamyl-tRNA Synthetase, Domain 3"/>
    <property type="match status" value="1"/>
</dbReference>
<dbReference type="Gene3D" id="3.40.50.620">
    <property type="entry name" value="HUPs"/>
    <property type="match status" value="1"/>
</dbReference>
<dbReference type="Gene3D" id="2.40.240.10">
    <property type="entry name" value="Ribosomal Protein L25, Chain P"/>
    <property type="match status" value="1"/>
</dbReference>
<dbReference type="HAMAP" id="MF_02076">
    <property type="entry name" value="Glu_tRNA_synth_type2"/>
    <property type="match status" value="1"/>
</dbReference>
<dbReference type="InterPro" id="IPR001412">
    <property type="entry name" value="aa-tRNA-synth_I_CS"/>
</dbReference>
<dbReference type="InterPro" id="IPR050132">
    <property type="entry name" value="Gln/Glu-tRNA_Ligase"/>
</dbReference>
<dbReference type="InterPro" id="IPR004526">
    <property type="entry name" value="Glu-tRNA-synth_arc/euk"/>
</dbReference>
<dbReference type="InterPro" id="IPR000924">
    <property type="entry name" value="Glu/Gln-tRNA-synth"/>
</dbReference>
<dbReference type="InterPro" id="IPR020058">
    <property type="entry name" value="Glu/Gln-tRNA-synth_Ib_cat-dom"/>
</dbReference>
<dbReference type="InterPro" id="IPR020059">
    <property type="entry name" value="Glu/Gln-tRNA-synth_Ib_codon-bd"/>
</dbReference>
<dbReference type="InterPro" id="IPR020061">
    <property type="entry name" value="Glu_tRNA_lig_a-bdl"/>
</dbReference>
<dbReference type="InterPro" id="IPR036282">
    <property type="entry name" value="Glutathione-S-Trfase_C_sf"/>
</dbReference>
<dbReference type="InterPro" id="IPR020056">
    <property type="entry name" value="Rbsml_bL25/Gln-tRNA_synth_N"/>
</dbReference>
<dbReference type="InterPro" id="IPR011035">
    <property type="entry name" value="Ribosomal_bL25/Gln-tRNA_synth"/>
</dbReference>
<dbReference type="InterPro" id="IPR014729">
    <property type="entry name" value="Rossmann-like_a/b/a_fold"/>
</dbReference>
<dbReference type="InterPro" id="IPR049437">
    <property type="entry name" value="tRNA-synt_1c_C2"/>
</dbReference>
<dbReference type="NCBIfam" id="TIGR00463">
    <property type="entry name" value="gltX_arch"/>
    <property type="match status" value="1"/>
</dbReference>
<dbReference type="PANTHER" id="PTHR43097:SF5">
    <property type="entry name" value="GLUTAMATE--TRNA LIGASE"/>
    <property type="match status" value="1"/>
</dbReference>
<dbReference type="PANTHER" id="PTHR43097">
    <property type="entry name" value="GLUTAMINE-TRNA LIGASE"/>
    <property type="match status" value="1"/>
</dbReference>
<dbReference type="Pfam" id="PF00749">
    <property type="entry name" value="tRNA-synt_1c"/>
    <property type="match status" value="1"/>
</dbReference>
<dbReference type="Pfam" id="PF03950">
    <property type="entry name" value="tRNA-synt_1c_C"/>
    <property type="match status" value="1"/>
</dbReference>
<dbReference type="Pfam" id="PF20974">
    <property type="entry name" value="tRNA-synt_1c_C2"/>
    <property type="match status" value="1"/>
</dbReference>
<dbReference type="PRINTS" id="PR00987">
    <property type="entry name" value="TRNASYNTHGLU"/>
</dbReference>
<dbReference type="SUPFAM" id="SSF47616">
    <property type="entry name" value="GST C-terminal domain-like"/>
    <property type="match status" value="1"/>
</dbReference>
<dbReference type="SUPFAM" id="SSF52374">
    <property type="entry name" value="Nucleotidylyl transferase"/>
    <property type="match status" value="1"/>
</dbReference>
<dbReference type="SUPFAM" id="SSF50715">
    <property type="entry name" value="Ribosomal protein L25-like"/>
    <property type="match status" value="1"/>
</dbReference>
<dbReference type="PROSITE" id="PS00178">
    <property type="entry name" value="AA_TRNA_LIGASE_I"/>
    <property type="match status" value="1"/>
</dbReference>
<reference key="1">
    <citation type="journal article" date="2002" name="Nature">
        <title>The genome sequence of Schizosaccharomyces pombe.</title>
        <authorList>
            <person name="Wood V."/>
            <person name="Gwilliam R."/>
            <person name="Rajandream M.A."/>
            <person name="Lyne M.H."/>
            <person name="Lyne R."/>
            <person name="Stewart A."/>
            <person name="Sgouros J.G."/>
            <person name="Peat N."/>
            <person name="Hayles J."/>
            <person name="Baker S.G."/>
            <person name="Basham D."/>
            <person name="Bowman S."/>
            <person name="Brooks K."/>
            <person name="Brown D."/>
            <person name="Brown S."/>
            <person name="Chillingworth T."/>
            <person name="Churcher C.M."/>
            <person name="Collins M."/>
            <person name="Connor R."/>
            <person name="Cronin A."/>
            <person name="Davis P."/>
            <person name="Feltwell T."/>
            <person name="Fraser A."/>
            <person name="Gentles S."/>
            <person name="Goble A."/>
            <person name="Hamlin N."/>
            <person name="Harris D.E."/>
            <person name="Hidalgo J."/>
            <person name="Hodgson G."/>
            <person name="Holroyd S."/>
            <person name="Hornsby T."/>
            <person name="Howarth S."/>
            <person name="Huckle E.J."/>
            <person name="Hunt S."/>
            <person name="Jagels K."/>
            <person name="James K.D."/>
            <person name="Jones L."/>
            <person name="Jones M."/>
            <person name="Leather S."/>
            <person name="McDonald S."/>
            <person name="McLean J."/>
            <person name="Mooney P."/>
            <person name="Moule S."/>
            <person name="Mungall K.L."/>
            <person name="Murphy L.D."/>
            <person name="Niblett D."/>
            <person name="Odell C."/>
            <person name="Oliver K."/>
            <person name="O'Neil S."/>
            <person name="Pearson D."/>
            <person name="Quail M.A."/>
            <person name="Rabbinowitsch E."/>
            <person name="Rutherford K.M."/>
            <person name="Rutter S."/>
            <person name="Saunders D."/>
            <person name="Seeger K."/>
            <person name="Sharp S."/>
            <person name="Skelton J."/>
            <person name="Simmonds M.N."/>
            <person name="Squares R."/>
            <person name="Squares S."/>
            <person name="Stevens K."/>
            <person name="Taylor K."/>
            <person name="Taylor R.G."/>
            <person name="Tivey A."/>
            <person name="Walsh S.V."/>
            <person name="Warren T."/>
            <person name="Whitehead S."/>
            <person name="Woodward J.R."/>
            <person name="Volckaert G."/>
            <person name="Aert R."/>
            <person name="Robben J."/>
            <person name="Grymonprez B."/>
            <person name="Weltjens I."/>
            <person name="Vanstreels E."/>
            <person name="Rieger M."/>
            <person name="Schaefer M."/>
            <person name="Mueller-Auer S."/>
            <person name="Gabel C."/>
            <person name="Fuchs M."/>
            <person name="Duesterhoeft A."/>
            <person name="Fritzc C."/>
            <person name="Holzer E."/>
            <person name="Moestl D."/>
            <person name="Hilbert H."/>
            <person name="Borzym K."/>
            <person name="Langer I."/>
            <person name="Beck A."/>
            <person name="Lehrach H."/>
            <person name="Reinhardt R."/>
            <person name="Pohl T.M."/>
            <person name="Eger P."/>
            <person name="Zimmermann W."/>
            <person name="Wedler H."/>
            <person name="Wambutt R."/>
            <person name="Purnelle B."/>
            <person name="Goffeau A."/>
            <person name="Cadieu E."/>
            <person name="Dreano S."/>
            <person name="Gloux S."/>
            <person name="Lelaure V."/>
            <person name="Mottier S."/>
            <person name="Galibert F."/>
            <person name="Aves S.J."/>
            <person name="Xiang Z."/>
            <person name="Hunt C."/>
            <person name="Moore K."/>
            <person name="Hurst S.M."/>
            <person name="Lucas M."/>
            <person name="Rochet M."/>
            <person name="Gaillardin C."/>
            <person name="Tallada V.A."/>
            <person name="Garzon A."/>
            <person name="Thode G."/>
            <person name="Daga R.R."/>
            <person name="Cruzado L."/>
            <person name="Jimenez J."/>
            <person name="Sanchez M."/>
            <person name="del Rey F."/>
            <person name="Benito J."/>
            <person name="Dominguez A."/>
            <person name="Revuelta J.L."/>
            <person name="Moreno S."/>
            <person name="Armstrong J."/>
            <person name="Forsburg S.L."/>
            <person name="Cerutti L."/>
            <person name="Lowe T."/>
            <person name="McCombie W.R."/>
            <person name="Paulsen I."/>
            <person name="Potashkin J."/>
            <person name="Shpakovski G.V."/>
            <person name="Ussery D."/>
            <person name="Barrell B.G."/>
            <person name="Nurse P."/>
        </authorList>
    </citation>
    <scope>NUCLEOTIDE SEQUENCE [LARGE SCALE GENOMIC DNA]</scope>
    <source>
        <strain>972 / ATCC 24843</strain>
    </source>
</reference>
<reference key="2">
    <citation type="journal article" date="2006" name="Nat. Biotechnol.">
        <title>ORFeome cloning and global analysis of protein localization in the fission yeast Schizosaccharomyces pombe.</title>
        <authorList>
            <person name="Matsuyama A."/>
            <person name="Arai R."/>
            <person name="Yashiroda Y."/>
            <person name="Shirai A."/>
            <person name="Kamata A."/>
            <person name="Sekido S."/>
            <person name="Kobayashi Y."/>
            <person name="Hashimoto A."/>
            <person name="Hamamoto M."/>
            <person name="Hiraoka Y."/>
            <person name="Horinouchi S."/>
            <person name="Yoshida M."/>
        </authorList>
    </citation>
    <scope>SUBCELLULAR LOCATION [LARGE SCALE ANALYSIS]</scope>
</reference>
<reference key="3">
    <citation type="journal article" date="2008" name="J. Proteome Res.">
        <title>Phosphoproteome analysis of fission yeast.</title>
        <authorList>
            <person name="Wilson-Grady J.T."/>
            <person name="Villen J."/>
            <person name="Gygi S.P."/>
        </authorList>
    </citation>
    <scope>PHOSPHORYLATION [LARGE SCALE ANALYSIS] AT SER-190</scope>
    <scope>IDENTIFICATION BY MASS SPECTROMETRY</scope>
</reference>
<evidence type="ECO:0000250" key="1"/>
<evidence type="ECO:0000269" key="2">
    <source>
    </source>
</evidence>
<evidence type="ECO:0000269" key="3">
    <source>
    </source>
</evidence>
<evidence type="ECO:0000305" key="4"/>
<feature type="chain" id="PRO_0000119738" description="Probable glutamate--tRNA ligase, cytoplasmic">
    <location>
        <begin position="1"/>
        <end position="716"/>
    </location>
</feature>
<feature type="short sequence motif" description="'HIGH' region">
    <location>
        <begin position="215"/>
        <end position="224"/>
    </location>
</feature>
<feature type="short sequence motif" description="'KMSKS' region">
    <location>
        <begin position="441"/>
        <end position="445"/>
    </location>
</feature>
<feature type="binding site" evidence="1">
    <location>
        <begin position="210"/>
        <end position="212"/>
    </location>
    <ligand>
        <name>L-glutamate</name>
        <dbReference type="ChEBI" id="CHEBI:29985"/>
    </ligand>
</feature>
<feature type="binding site" evidence="1">
    <location>
        <position position="220"/>
    </location>
    <ligand>
        <name>ATP</name>
        <dbReference type="ChEBI" id="CHEBI:30616"/>
    </ligand>
</feature>
<feature type="binding site" evidence="1">
    <location>
        <position position="246"/>
    </location>
    <ligand>
        <name>L-glutamate</name>
        <dbReference type="ChEBI" id="CHEBI:29985"/>
    </ligand>
</feature>
<feature type="binding site" evidence="1">
    <location>
        <begin position="386"/>
        <end position="390"/>
    </location>
    <ligand>
        <name>L-glutamate</name>
        <dbReference type="ChEBI" id="CHEBI:29985"/>
    </ligand>
</feature>
<feature type="binding site" evidence="1">
    <location>
        <position position="404"/>
    </location>
    <ligand>
        <name>L-glutamate</name>
        <dbReference type="ChEBI" id="CHEBI:29985"/>
    </ligand>
</feature>
<feature type="binding site" evidence="1">
    <location>
        <position position="407"/>
    </location>
    <ligand>
        <name>ATP</name>
        <dbReference type="ChEBI" id="CHEBI:30616"/>
    </ligand>
</feature>
<feature type="binding site" evidence="1">
    <location>
        <begin position="441"/>
        <end position="445"/>
    </location>
    <ligand>
        <name>ATP</name>
        <dbReference type="ChEBI" id="CHEBI:30616"/>
    </ligand>
</feature>
<feature type="modified residue" description="Phosphoserine" evidence="3">
    <location>
        <position position="190"/>
    </location>
</feature>
<accession>O13775</accession>